<sequence length="989" mass="106621">MSDNDKPKLGMRAPLGIKRTVETSKVKQSFSHGRSNTVIVETKRRRVINKPGSGDAATAAETAKKQAEPVENTPNKDTAVTQTATKNETVATPAAAPAPAPAAAPKPVAAEATAQETSKAAPAAAQPVAEKEAAAPASAEAAKSAAIKVTDRGAKKTTEKNGANASGNRPSGNRSQDNRGRQGGRGSQNKNQTRSGGQPRQPRTLAHRDLASRQELQARLLREAEESRLQALEEARRREDRLKQEADLEEQRRIEEKRRLEAEAKVEAEKQAALKEKEKAEAKARAKAEKEAKAAQAKTAGAAEGEEKTRRPAKAAAPKAREERSESPRSPAPRRFTPVSPPRREAPRPAMRDRKGEDRRQSGKLTVTKALSGDEGGARARSLAALRRAREKDKRANQNRAQQVRQIRDVVVPEAITVQELANRMAERGADLVKALFKMGVAVTLTQTIDQDTAELLVTEFGHNIKRVSESDVEIDSSSDVDPEETLKSRPPVVTIMGHVDHGKTSLLDALRGSDVVRGEAGGITQHIGAYQVESPSGEKITLLDTPGHEAFSEMRARGANVTDIVIIVVAADDGLRPQTVEAIDHARAADVPIIIAINKMDKPEANPQRIREALLQYNVQVEAMGGDVQDVEISAAKKTGLDELIEKILLQAEMLELKANPDRAAEGTVVEAKLDRGRGPVATILVRRGTLKVGDIFVVGEFSGRVRAMTDAQGKNQKEAGPSMPVEVLGLSGVPQAGDTLTVVESEARAREVAAYRAEIALRKRTTAQPASLESMFSALKDKQAVEYPLLIKADTQGSVEAIAGALNKISNEDIRVRILHQGVGGITESDVSLAAASGAPIIGFHVRPNSKARDIARRDGVALKFYDVIYDLIDEIKAAMAGKLGPEYFETVVGKAEIREVFSAGKHGRAAGLLVLEGYIRQKLRARVLRNDVIIYNGSIASLRRFKDDVPEVRAGLECGITLEGSTDIKAGDIVETFEVEERARTL</sequence>
<evidence type="ECO:0000250" key="1"/>
<evidence type="ECO:0000255" key="2">
    <source>
        <dbReference type="HAMAP-Rule" id="MF_00100"/>
    </source>
</evidence>
<evidence type="ECO:0000256" key="3">
    <source>
        <dbReference type="SAM" id="MobiDB-lite"/>
    </source>
</evidence>
<accession>Q5NQ27</accession>
<protein>
    <recommendedName>
        <fullName evidence="2">Translation initiation factor IF-2</fullName>
    </recommendedName>
</protein>
<comment type="function">
    <text evidence="2">One of the essential components for the initiation of protein synthesis. Protects formylmethionyl-tRNA from spontaneous hydrolysis and promotes its binding to the 30S ribosomal subunits. Also involved in the hydrolysis of GTP during the formation of the 70S ribosomal complex.</text>
</comment>
<comment type="subcellular location">
    <subcellularLocation>
        <location evidence="2">Cytoplasm</location>
    </subcellularLocation>
</comment>
<comment type="similarity">
    <text evidence="2">Belongs to the TRAFAC class translation factor GTPase superfamily. Classic translation factor GTPase family. IF-2 subfamily.</text>
</comment>
<name>IF2_ZYMMO</name>
<proteinExistence type="inferred from homology"/>
<dbReference type="EMBL" id="AE008692">
    <property type="protein sequence ID" value="AAV89178.1"/>
    <property type="molecule type" value="Genomic_DNA"/>
</dbReference>
<dbReference type="RefSeq" id="WP_011240460.1">
    <property type="nucleotide sequence ID" value="NZ_CP035711.1"/>
</dbReference>
<dbReference type="SMR" id="Q5NQ27"/>
<dbReference type="STRING" id="264203.ZMO0554"/>
<dbReference type="KEGG" id="zmo:ZMO0554"/>
<dbReference type="eggNOG" id="COG0532">
    <property type="taxonomic scope" value="Bacteria"/>
</dbReference>
<dbReference type="eggNOG" id="COG3064">
    <property type="taxonomic scope" value="Bacteria"/>
</dbReference>
<dbReference type="HOGENOM" id="CLU_006301_10_1_5"/>
<dbReference type="Proteomes" id="UP000001173">
    <property type="component" value="Chromosome"/>
</dbReference>
<dbReference type="GO" id="GO:0005829">
    <property type="term" value="C:cytosol"/>
    <property type="evidence" value="ECO:0007669"/>
    <property type="project" value="TreeGrafter"/>
</dbReference>
<dbReference type="GO" id="GO:0005525">
    <property type="term" value="F:GTP binding"/>
    <property type="evidence" value="ECO:0007669"/>
    <property type="project" value="UniProtKB-KW"/>
</dbReference>
<dbReference type="GO" id="GO:0003924">
    <property type="term" value="F:GTPase activity"/>
    <property type="evidence" value="ECO:0007669"/>
    <property type="project" value="UniProtKB-UniRule"/>
</dbReference>
<dbReference type="GO" id="GO:0003743">
    <property type="term" value="F:translation initiation factor activity"/>
    <property type="evidence" value="ECO:0007669"/>
    <property type="project" value="UniProtKB-UniRule"/>
</dbReference>
<dbReference type="CDD" id="cd01887">
    <property type="entry name" value="IF2_eIF5B"/>
    <property type="match status" value="1"/>
</dbReference>
<dbReference type="CDD" id="cd03702">
    <property type="entry name" value="IF2_mtIF2_II"/>
    <property type="match status" value="1"/>
</dbReference>
<dbReference type="CDD" id="cd03692">
    <property type="entry name" value="mtIF2_IVc"/>
    <property type="match status" value="1"/>
</dbReference>
<dbReference type="FunFam" id="2.40.30.10:FF:000007">
    <property type="entry name" value="Translation initiation factor IF-2"/>
    <property type="match status" value="1"/>
</dbReference>
<dbReference type="FunFam" id="2.40.30.10:FF:000008">
    <property type="entry name" value="Translation initiation factor IF-2"/>
    <property type="match status" value="1"/>
</dbReference>
<dbReference type="FunFam" id="3.40.50.10050:FF:000001">
    <property type="entry name" value="Translation initiation factor IF-2"/>
    <property type="match status" value="1"/>
</dbReference>
<dbReference type="FunFam" id="3.40.50.300:FF:000019">
    <property type="entry name" value="Translation initiation factor IF-2"/>
    <property type="match status" value="1"/>
</dbReference>
<dbReference type="Gene3D" id="3.40.50.300">
    <property type="entry name" value="P-loop containing nucleotide triphosphate hydrolases"/>
    <property type="match status" value="1"/>
</dbReference>
<dbReference type="Gene3D" id="2.40.30.10">
    <property type="entry name" value="Translation factors"/>
    <property type="match status" value="2"/>
</dbReference>
<dbReference type="Gene3D" id="3.40.50.10050">
    <property type="entry name" value="Translation initiation factor IF- 2, domain 3"/>
    <property type="match status" value="1"/>
</dbReference>
<dbReference type="HAMAP" id="MF_00100_B">
    <property type="entry name" value="IF_2_B"/>
    <property type="match status" value="1"/>
</dbReference>
<dbReference type="InterPro" id="IPR053905">
    <property type="entry name" value="EF-G-like_DII"/>
</dbReference>
<dbReference type="InterPro" id="IPR013575">
    <property type="entry name" value="IF2_assoc_dom_bac"/>
</dbReference>
<dbReference type="InterPro" id="IPR044145">
    <property type="entry name" value="IF2_II"/>
</dbReference>
<dbReference type="InterPro" id="IPR006847">
    <property type="entry name" value="IF2_N"/>
</dbReference>
<dbReference type="InterPro" id="IPR027417">
    <property type="entry name" value="P-loop_NTPase"/>
</dbReference>
<dbReference type="InterPro" id="IPR005225">
    <property type="entry name" value="Small_GTP-bd"/>
</dbReference>
<dbReference type="InterPro" id="IPR000795">
    <property type="entry name" value="T_Tr_GTP-bd_dom"/>
</dbReference>
<dbReference type="InterPro" id="IPR000178">
    <property type="entry name" value="TF_IF2_bacterial-like"/>
</dbReference>
<dbReference type="InterPro" id="IPR015760">
    <property type="entry name" value="TIF_IF2"/>
</dbReference>
<dbReference type="InterPro" id="IPR023115">
    <property type="entry name" value="TIF_IF2_dom3"/>
</dbReference>
<dbReference type="InterPro" id="IPR036925">
    <property type="entry name" value="TIF_IF2_dom3_sf"/>
</dbReference>
<dbReference type="InterPro" id="IPR009000">
    <property type="entry name" value="Transl_B-barrel_sf"/>
</dbReference>
<dbReference type="NCBIfam" id="TIGR00487">
    <property type="entry name" value="IF-2"/>
    <property type="match status" value="1"/>
</dbReference>
<dbReference type="NCBIfam" id="TIGR00231">
    <property type="entry name" value="small_GTP"/>
    <property type="match status" value="1"/>
</dbReference>
<dbReference type="PANTHER" id="PTHR43381:SF5">
    <property type="entry name" value="TR-TYPE G DOMAIN-CONTAINING PROTEIN"/>
    <property type="match status" value="1"/>
</dbReference>
<dbReference type="PANTHER" id="PTHR43381">
    <property type="entry name" value="TRANSLATION INITIATION FACTOR IF-2-RELATED"/>
    <property type="match status" value="1"/>
</dbReference>
<dbReference type="Pfam" id="PF22042">
    <property type="entry name" value="EF-G_D2"/>
    <property type="match status" value="1"/>
</dbReference>
<dbReference type="Pfam" id="PF00009">
    <property type="entry name" value="GTP_EFTU"/>
    <property type="match status" value="1"/>
</dbReference>
<dbReference type="Pfam" id="PF11987">
    <property type="entry name" value="IF-2"/>
    <property type="match status" value="1"/>
</dbReference>
<dbReference type="Pfam" id="PF08364">
    <property type="entry name" value="IF2_assoc"/>
    <property type="match status" value="1"/>
</dbReference>
<dbReference type="Pfam" id="PF04760">
    <property type="entry name" value="IF2_N"/>
    <property type="match status" value="1"/>
</dbReference>
<dbReference type="SUPFAM" id="SSF52156">
    <property type="entry name" value="Initiation factor IF2/eIF5b, domain 3"/>
    <property type="match status" value="1"/>
</dbReference>
<dbReference type="SUPFAM" id="SSF52540">
    <property type="entry name" value="P-loop containing nucleoside triphosphate hydrolases"/>
    <property type="match status" value="1"/>
</dbReference>
<dbReference type="SUPFAM" id="SSF50447">
    <property type="entry name" value="Translation proteins"/>
    <property type="match status" value="2"/>
</dbReference>
<dbReference type="PROSITE" id="PS51722">
    <property type="entry name" value="G_TR_2"/>
    <property type="match status" value="1"/>
</dbReference>
<dbReference type="PROSITE" id="PS01176">
    <property type="entry name" value="IF2"/>
    <property type="match status" value="1"/>
</dbReference>
<organism>
    <name type="scientific">Zymomonas mobilis subsp. mobilis (strain ATCC 31821 / ZM4 / CP4)</name>
    <dbReference type="NCBI Taxonomy" id="264203"/>
    <lineage>
        <taxon>Bacteria</taxon>
        <taxon>Pseudomonadati</taxon>
        <taxon>Pseudomonadota</taxon>
        <taxon>Alphaproteobacteria</taxon>
        <taxon>Sphingomonadales</taxon>
        <taxon>Zymomonadaceae</taxon>
        <taxon>Zymomonas</taxon>
    </lineage>
</organism>
<keyword id="KW-0963">Cytoplasm</keyword>
<keyword id="KW-0342">GTP-binding</keyword>
<keyword id="KW-0396">Initiation factor</keyword>
<keyword id="KW-0547">Nucleotide-binding</keyword>
<keyword id="KW-0648">Protein biosynthesis</keyword>
<keyword id="KW-1185">Reference proteome</keyword>
<feature type="chain" id="PRO_0000228265" description="Translation initiation factor IF-2">
    <location>
        <begin position="1"/>
        <end position="989"/>
    </location>
</feature>
<feature type="domain" description="tr-type G">
    <location>
        <begin position="489"/>
        <end position="659"/>
    </location>
</feature>
<feature type="region of interest" description="Disordered" evidence="3">
    <location>
        <begin position="43"/>
        <end position="219"/>
    </location>
</feature>
<feature type="region of interest" description="Disordered" evidence="3">
    <location>
        <begin position="234"/>
        <end position="379"/>
    </location>
</feature>
<feature type="region of interest" description="G1" evidence="1">
    <location>
        <begin position="498"/>
        <end position="505"/>
    </location>
</feature>
<feature type="region of interest" description="G2" evidence="1">
    <location>
        <begin position="523"/>
        <end position="527"/>
    </location>
</feature>
<feature type="region of interest" description="G3" evidence="1">
    <location>
        <begin position="545"/>
        <end position="548"/>
    </location>
</feature>
<feature type="region of interest" description="G4" evidence="1">
    <location>
        <begin position="599"/>
        <end position="602"/>
    </location>
</feature>
<feature type="region of interest" description="G5" evidence="1">
    <location>
        <begin position="635"/>
        <end position="637"/>
    </location>
</feature>
<feature type="compositionally biased region" description="Polar residues" evidence="3">
    <location>
        <begin position="72"/>
        <end position="87"/>
    </location>
</feature>
<feature type="compositionally biased region" description="Low complexity" evidence="3">
    <location>
        <begin position="105"/>
        <end position="146"/>
    </location>
</feature>
<feature type="compositionally biased region" description="Basic and acidic residues" evidence="3">
    <location>
        <begin position="149"/>
        <end position="159"/>
    </location>
</feature>
<feature type="compositionally biased region" description="Polar residues" evidence="3">
    <location>
        <begin position="160"/>
        <end position="171"/>
    </location>
</feature>
<feature type="compositionally biased region" description="Basic and acidic residues" evidence="3">
    <location>
        <begin position="234"/>
        <end position="293"/>
    </location>
</feature>
<feature type="compositionally biased region" description="Low complexity" evidence="3">
    <location>
        <begin position="294"/>
        <end position="303"/>
    </location>
</feature>
<feature type="compositionally biased region" description="Basic and acidic residues" evidence="3">
    <location>
        <begin position="342"/>
        <end position="361"/>
    </location>
</feature>
<feature type="binding site" evidence="2">
    <location>
        <begin position="498"/>
        <end position="505"/>
    </location>
    <ligand>
        <name>GTP</name>
        <dbReference type="ChEBI" id="CHEBI:37565"/>
    </ligand>
</feature>
<feature type="binding site" evidence="2">
    <location>
        <begin position="545"/>
        <end position="549"/>
    </location>
    <ligand>
        <name>GTP</name>
        <dbReference type="ChEBI" id="CHEBI:37565"/>
    </ligand>
</feature>
<feature type="binding site" evidence="2">
    <location>
        <begin position="599"/>
        <end position="602"/>
    </location>
    <ligand>
        <name>GTP</name>
        <dbReference type="ChEBI" id="CHEBI:37565"/>
    </ligand>
</feature>
<reference key="1">
    <citation type="journal article" date="2005" name="Nat. Biotechnol.">
        <title>The genome sequence of the ethanologenic bacterium Zymomonas mobilis ZM4.</title>
        <authorList>
            <person name="Seo J.-S."/>
            <person name="Chong H."/>
            <person name="Park H.S."/>
            <person name="Yoon K.-O."/>
            <person name="Jung C."/>
            <person name="Kim J.J."/>
            <person name="Hong J.H."/>
            <person name="Kim H."/>
            <person name="Kim J.-H."/>
            <person name="Kil J.-I."/>
            <person name="Park C.J."/>
            <person name="Oh H.-M."/>
            <person name="Lee J.-S."/>
            <person name="Jin S.-J."/>
            <person name="Um H.-W."/>
            <person name="Lee H.-J."/>
            <person name="Oh S.-J."/>
            <person name="Kim J.Y."/>
            <person name="Kang H.L."/>
            <person name="Lee S.Y."/>
            <person name="Lee K.J."/>
            <person name="Kang H.S."/>
        </authorList>
    </citation>
    <scope>NUCLEOTIDE SEQUENCE [LARGE SCALE GENOMIC DNA]</scope>
    <source>
        <strain>ATCC 31821 / ZM4 / CP4</strain>
    </source>
</reference>
<gene>
    <name evidence="2" type="primary">infB</name>
    <name type="ordered locus">ZMO0554</name>
</gene>